<comment type="function">
    <text evidence="1">Catalyzes the attachment of threonine to tRNA(Thr) in a two-step reaction: L-threonine is first activated by ATP to form Thr-AMP and then transferred to the acceptor end of tRNA(Thr). Also edits incorrectly charged L-seryl-tRNA(Thr).</text>
</comment>
<comment type="catalytic activity">
    <reaction evidence="1">
        <text>tRNA(Thr) + L-threonine + ATP = L-threonyl-tRNA(Thr) + AMP + diphosphate + H(+)</text>
        <dbReference type="Rhea" id="RHEA:24624"/>
        <dbReference type="Rhea" id="RHEA-COMP:9670"/>
        <dbReference type="Rhea" id="RHEA-COMP:9704"/>
        <dbReference type="ChEBI" id="CHEBI:15378"/>
        <dbReference type="ChEBI" id="CHEBI:30616"/>
        <dbReference type="ChEBI" id="CHEBI:33019"/>
        <dbReference type="ChEBI" id="CHEBI:57926"/>
        <dbReference type="ChEBI" id="CHEBI:78442"/>
        <dbReference type="ChEBI" id="CHEBI:78534"/>
        <dbReference type="ChEBI" id="CHEBI:456215"/>
        <dbReference type="EC" id="6.1.1.3"/>
    </reaction>
</comment>
<comment type="cofactor">
    <cofactor evidence="1">
        <name>Zn(2+)</name>
        <dbReference type="ChEBI" id="CHEBI:29105"/>
    </cofactor>
    <text evidence="1">Binds 1 zinc ion per subunit.</text>
</comment>
<comment type="subunit">
    <text evidence="1">Homodimer.</text>
</comment>
<comment type="subcellular location">
    <subcellularLocation>
        <location evidence="1">Cytoplasm</location>
    </subcellularLocation>
</comment>
<comment type="similarity">
    <text evidence="1">Belongs to the class-II aminoacyl-tRNA synthetase family.</text>
</comment>
<protein>
    <recommendedName>
        <fullName evidence="1">Threonine--tRNA ligase</fullName>
        <ecNumber evidence="1">6.1.1.3</ecNumber>
    </recommendedName>
    <alternativeName>
        <fullName evidence="1">Threonyl-tRNA synthetase</fullName>
        <shortName evidence="1">ThrRS</shortName>
    </alternativeName>
</protein>
<gene>
    <name evidence="1" type="primary">thrS</name>
    <name type="ordered locus">CFPG_104</name>
</gene>
<feature type="chain" id="PRO_1000098541" description="Threonine--tRNA ligase">
    <location>
        <begin position="1"/>
        <end position="648"/>
    </location>
</feature>
<feature type="domain" description="TGS" evidence="2">
    <location>
        <begin position="1"/>
        <end position="61"/>
    </location>
</feature>
<feature type="region of interest" description="Catalytic" evidence="1">
    <location>
        <begin position="243"/>
        <end position="542"/>
    </location>
</feature>
<feature type="binding site" evidence="1">
    <location>
        <position position="338"/>
    </location>
    <ligand>
        <name>Zn(2+)</name>
        <dbReference type="ChEBI" id="CHEBI:29105"/>
    </ligand>
</feature>
<feature type="binding site" evidence="1">
    <location>
        <position position="389"/>
    </location>
    <ligand>
        <name>Zn(2+)</name>
        <dbReference type="ChEBI" id="CHEBI:29105"/>
    </ligand>
</feature>
<feature type="binding site" evidence="1">
    <location>
        <position position="519"/>
    </location>
    <ligand>
        <name>Zn(2+)</name>
        <dbReference type="ChEBI" id="CHEBI:29105"/>
    </ligand>
</feature>
<evidence type="ECO:0000255" key="1">
    <source>
        <dbReference type="HAMAP-Rule" id="MF_00184"/>
    </source>
</evidence>
<evidence type="ECO:0000255" key="2">
    <source>
        <dbReference type="PROSITE-ProRule" id="PRU01228"/>
    </source>
</evidence>
<accession>B6YQ95</accession>
<name>SYT_AZOPC</name>
<sequence length="648" mass="75185">MIKITFPNTSARNYAIGTTPMQIAESISCRLAEEILSANVNGEMWDLSRPINENASVKLYKWEDFEGKRTFWHSSAHLLAESLQELYPNIHFGMGPAIENGFYYDVDLGDGVVIKDVDLVTIEKKMQELASKKLSISRQNVTKQNALELFGKKGETYKIELISKLEDGKITVYTQGNFTDLCRGPHLPNTSYIKAIKLTSVARAYWKGDESRKQLTRIYGISFPKKEELSEYLALMEKAKKRDHRRIGKEMELFTFSHKVGRGLPLWLPKGTQLRLRLEDFLKRIQKKYGYQQVITPHIGNKTLYIASGHYAKYGKDSFQPIHTPELGEEFLLKPMNCPHHCEIYKAFLRSYKELPLRLAEFGTVYRYERSGELQGLTRVRGFTQDDAHIFCSPEQVKEELIKVIDIVRVIFCALNFNDYEVQISLRDLNNRIKYIGSEENWKNSEGAIIEVCQEKKIKAKIKLGEAAFYGPKLDFMVKDALGRNWQLGTIQVDYNLPERFELEYVGADNQKHRPVMIHRAPFGSMERFVAVMIEHTGGKFPLWLVSDQVVILPVSENYNQYAEEIAKEFHKRDIRVTIDKRNEKVGRKIRDNELKKIPYLLIIGEKERRNSEISVRKHGKENIGIMKVTEFAEFLKKEVERQMSQWQ</sequence>
<keyword id="KW-0030">Aminoacyl-tRNA synthetase</keyword>
<keyword id="KW-0067">ATP-binding</keyword>
<keyword id="KW-0963">Cytoplasm</keyword>
<keyword id="KW-0436">Ligase</keyword>
<keyword id="KW-0479">Metal-binding</keyword>
<keyword id="KW-0547">Nucleotide-binding</keyword>
<keyword id="KW-0648">Protein biosynthesis</keyword>
<keyword id="KW-1185">Reference proteome</keyword>
<keyword id="KW-0694">RNA-binding</keyword>
<keyword id="KW-0820">tRNA-binding</keyword>
<keyword id="KW-0862">Zinc</keyword>
<organism>
    <name type="scientific">Azobacteroides pseudotrichonymphae genomovar. CFP2</name>
    <dbReference type="NCBI Taxonomy" id="511995"/>
    <lineage>
        <taxon>Bacteria</taxon>
        <taxon>Pseudomonadati</taxon>
        <taxon>Bacteroidota</taxon>
        <taxon>Bacteroidia</taxon>
        <taxon>Bacteroidales</taxon>
        <taxon>Candidatus Azobacteroides</taxon>
    </lineage>
</organism>
<dbReference type="EC" id="6.1.1.3" evidence="1"/>
<dbReference type="EMBL" id="AP010656">
    <property type="protein sequence ID" value="BAG83367.1"/>
    <property type="molecule type" value="Genomic_DNA"/>
</dbReference>
<dbReference type="RefSeq" id="WP_012573128.1">
    <property type="nucleotide sequence ID" value="NC_011565.1"/>
</dbReference>
<dbReference type="SMR" id="B6YQ95"/>
<dbReference type="STRING" id="511995.CFPG_104"/>
<dbReference type="KEGG" id="aps:CFPG_104"/>
<dbReference type="eggNOG" id="COG0441">
    <property type="taxonomic scope" value="Bacteria"/>
</dbReference>
<dbReference type="HOGENOM" id="CLU_008554_0_1_10"/>
<dbReference type="OrthoDB" id="9802304at2"/>
<dbReference type="Proteomes" id="UP000000723">
    <property type="component" value="Chromosome"/>
</dbReference>
<dbReference type="GO" id="GO:0005737">
    <property type="term" value="C:cytoplasm"/>
    <property type="evidence" value="ECO:0007669"/>
    <property type="project" value="UniProtKB-SubCell"/>
</dbReference>
<dbReference type="GO" id="GO:0005524">
    <property type="term" value="F:ATP binding"/>
    <property type="evidence" value="ECO:0007669"/>
    <property type="project" value="UniProtKB-UniRule"/>
</dbReference>
<dbReference type="GO" id="GO:0046872">
    <property type="term" value="F:metal ion binding"/>
    <property type="evidence" value="ECO:0007669"/>
    <property type="project" value="UniProtKB-KW"/>
</dbReference>
<dbReference type="GO" id="GO:0004829">
    <property type="term" value="F:threonine-tRNA ligase activity"/>
    <property type="evidence" value="ECO:0007669"/>
    <property type="project" value="UniProtKB-UniRule"/>
</dbReference>
<dbReference type="GO" id="GO:0000049">
    <property type="term" value="F:tRNA binding"/>
    <property type="evidence" value="ECO:0007669"/>
    <property type="project" value="UniProtKB-KW"/>
</dbReference>
<dbReference type="GO" id="GO:0006435">
    <property type="term" value="P:threonyl-tRNA aminoacylation"/>
    <property type="evidence" value="ECO:0007669"/>
    <property type="project" value="UniProtKB-UniRule"/>
</dbReference>
<dbReference type="CDD" id="cd01667">
    <property type="entry name" value="TGS_ThrRS"/>
    <property type="match status" value="1"/>
</dbReference>
<dbReference type="CDD" id="cd00860">
    <property type="entry name" value="ThrRS_anticodon"/>
    <property type="match status" value="1"/>
</dbReference>
<dbReference type="CDD" id="cd00771">
    <property type="entry name" value="ThrRS_core"/>
    <property type="match status" value="1"/>
</dbReference>
<dbReference type="FunFam" id="3.30.54.20:FF:000002">
    <property type="entry name" value="Threonine--tRNA ligase"/>
    <property type="match status" value="1"/>
</dbReference>
<dbReference type="FunFam" id="3.30.930.10:FF:000002">
    <property type="entry name" value="Threonine--tRNA ligase"/>
    <property type="match status" value="1"/>
</dbReference>
<dbReference type="FunFam" id="3.40.50.800:FF:000001">
    <property type="entry name" value="Threonine--tRNA ligase"/>
    <property type="match status" value="1"/>
</dbReference>
<dbReference type="FunFam" id="3.30.980.10:FF:000005">
    <property type="entry name" value="Threonyl-tRNA synthetase, mitochondrial"/>
    <property type="match status" value="1"/>
</dbReference>
<dbReference type="Gene3D" id="3.10.20.30">
    <property type="match status" value="1"/>
</dbReference>
<dbReference type="Gene3D" id="3.30.54.20">
    <property type="match status" value="1"/>
</dbReference>
<dbReference type="Gene3D" id="3.40.50.800">
    <property type="entry name" value="Anticodon-binding domain"/>
    <property type="match status" value="1"/>
</dbReference>
<dbReference type="Gene3D" id="3.30.930.10">
    <property type="entry name" value="Bira Bifunctional Protein, Domain 2"/>
    <property type="match status" value="1"/>
</dbReference>
<dbReference type="Gene3D" id="3.30.980.10">
    <property type="entry name" value="Threonyl-trna Synthetase, Chain A, domain 2"/>
    <property type="match status" value="1"/>
</dbReference>
<dbReference type="HAMAP" id="MF_00184">
    <property type="entry name" value="Thr_tRNA_synth"/>
    <property type="match status" value="1"/>
</dbReference>
<dbReference type="InterPro" id="IPR002314">
    <property type="entry name" value="aa-tRNA-synt_IIb"/>
</dbReference>
<dbReference type="InterPro" id="IPR006195">
    <property type="entry name" value="aa-tRNA-synth_II"/>
</dbReference>
<dbReference type="InterPro" id="IPR045864">
    <property type="entry name" value="aa-tRNA-synth_II/BPL/LPL"/>
</dbReference>
<dbReference type="InterPro" id="IPR004154">
    <property type="entry name" value="Anticodon-bd"/>
</dbReference>
<dbReference type="InterPro" id="IPR036621">
    <property type="entry name" value="Anticodon-bd_dom_sf"/>
</dbReference>
<dbReference type="InterPro" id="IPR012675">
    <property type="entry name" value="Beta-grasp_dom_sf"/>
</dbReference>
<dbReference type="InterPro" id="IPR004095">
    <property type="entry name" value="TGS"/>
</dbReference>
<dbReference type="InterPro" id="IPR012676">
    <property type="entry name" value="TGS-like"/>
</dbReference>
<dbReference type="InterPro" id="IPR002320">
    <property type="entry name" value="Thr-tRNA-ligase_IIa"/>
</dbReference>
<dbReference type="InterPro" id="IPR018163">
    <property type="entry name" value="Thr/Ala-tRNA-synth_IIc_edit"/>
</dbReference>
<dbReference type="InterPro" id="IPR047246">
    <property type="entry name" value="ThrRS_anticodon"/>
</dbReference>
<dbReference type="InterPro" id="IPR033728">
    <property type="entry name" value="ThrRS_core"/>
</dbReference>
<dbReference type="InterPro" id="IPR012947">
    <property type="entry name" value="tRNA_SAD"/>
</dbReference>
<dbReference type="NCBIfam" id="TIGR00418">
    <property type="entry name" value="thrS"/>
    <property type="match status" value="1"/>
</dbReference>
<dbReference type="PANTHER" id="PTHR11451:SF44">
    <property type="entry name" value="THREONINE--TRNA LIGASE, CHLOROPLASTIC_MITOCHONDRIAL 2"/>
    <property type="match status" value="1"/>
</dbReference>
<dbReference type="PANTHER" id="PTHR11451">
    <property type="entry name" value="THREONINE-TRNA LIGASE"/>
    <property type="match status" value="1"/>
</dbReference>
<dbReference type="Pfam" id="PF03129">
    <property type="entry name" value="HGTP_anticodon"/>
    <property type="match status" value="1"/>
</dbReference>
<dbReference type="Pfam" id="PF02824">
    <property type="entry name" value="TGS"/>
    <property type="match status" value="1"/>
</dbReference>
<dbReference type="Pfam" id="PF00587">
    <property type="entry name" value="tRNA-synt_2b"/>
    <property type="match status" value="1"/>
</dbReference>
<dbReference type="Pfam" id="PF07973">
    <property type="entry name" value="tRNA_SAD"/>
    <property type="match status" value="1"/>
</dbReference>
<dbReference type="PRINTS" id="PR01047">
    <property type="entry name" value="TRNASYNTHTHR"/>
</dbReference>
<dbReference type="SMART" id="SM00863">
    <property type="entry name" value="tRNA_SAD"/>
    <property type="match status" value="1"/>
</dbReference>
<dbReference type="SUPFAM" id="SSF52954">
    <property type="entry name" value="Class II aaRS ABD-related"/>
    <property type="match status" value="1"/>
</dbReference>
<dbReference type="SUPFAM" id="SSF55681">
    <property type="entry name" value="Class II aaRS and biotin synthetases"/>
    <property type="match status" value="1"/>
</dbReference>
<dbReference type="SUPFAM" id="SSF81271">
    <property type="entry name" value="TGS-like"/>
    <property type="match status" value="1"/>
</dbReference>
<dbReference type="SUPFAM" id="SSF55186">
    <property type="entry name" value="ThrRS/AlaRS common domain"/>
    <property type="match status" value="1"/>
</dbReference>
<dbReference type="PROSITE" id="PS50862">
    <property type="entry name" value="AA_TRNA_LIGASE_II"/>
    <property type="match status" value="1"/>
</dbReference>
<dbReference type="PROSITE" id="PS51880">
    <property type="entry name" value="TGS"/>
    <property type="match status" value="1"/>
</dbReference>
<reference key="1">
    <citation type="journal article" date="2008" name="Science">
        <title>Genome of an endosymbiont coupling N2 fixation to cellulolysis within RT protist cells in termite gut.</title>
        <authorList>
            <person name="Hongoh Y."/>
            <person name="Sharma V.K."/>
            <person name="Prakash T."/>
            <person name="Noda S."/>
            <person name="Toh H."/>
            <person name="Taylor T.D."/>
            <person name="Kudo T."/>
            <person name="Sakaki Y."/>
            <person name="Toyoda A."/>
            <person name="Hattori M."/>
            <person name="Ohkuma M."/>
        </authorList>
    </citation>
    <scope>NUCLEOTIDE SEQUENCE [LARGE SCALE GENOMIC DNA]</scope>
</reference>
<proteinExistence type="inferred from homology"/>